<reference key="1">
    <citation type="journal article" date="2011" name="Stand. Genomic Sci.">
        <title>Complete genome sequence of Rhodospirillum rubrum type strain (S1).</title>
        <authorList>
            <person name="Munk A.C."/>
            <person name="Copeland A."/>
            <person name="Lucas S."/>
            <person name="Lapidus A."/>
            <person name="Del Rio T.G."/>
            <person name="Barry K."/>
            <person name="Detter J.C."/>
            <person name="Hammon N."/>
            <person name="Israni S."/>
            <person name="Pitluck S."/>
            <person name="Brettin T."/>
            <person name="Bruce D."/>
            <person name="Han C."/>
            <person name="Tapia R."/>
            <person name="Gilna P."/>
            <person name="Schmutz J."/>
            <person name="Larimer F."/>
            <person name="Land M."/>
            <person name="Kyrpides N.C."/>
            <person name="Mavromatis K."/>
            <person name="Richardson P."/>
            <person name="Rohde M."/>
            <person name="Goeker M."/>
            <person name="Klenk H.P."/>
            <person name="Zhang Y."/>
            <person name="Roberts G.P."/>
            <person name="Reslewic S."/>
            <person name="Schwartz D.C."/>
        </authorList>
    </citation>
    <scope>NUCLEOTIDE SEQUENCE [LARGE SCALE GENOMIC DNA]</scope>
    <source>
        <strain>ATCC 11170 / ATH 1.1.1 / DSM 467 / LMG 4362 / NCIMB 8255 / S1</strain>
    </source>
</reference>
<sequence>MSRRCAVTGKGVQTGNNVSHSNIKSRRRFLPNLQVNSLMSDLLREPVRMRLSAHGLRTVEHRGGIDAFLLSTPSVELTVELRKVKRRMVKIRDAAAAAA</sequence>
<dbReference type="EMBL" id="CP000230">
    <property type="protein sequence ID" value="ABC21015.1"/>
    <property type="molecule type" value="Genomic_DNA"/>
</dbReference>
<dbReference type="RefSeq" id="WP_011387963.1">
    <property type="nucleotide sequence ID" value="NC_007643.1"/>
</dbReference>
<dbReference type="RefSeq" id="YP_425302.1">
    <property type="nucleotide sequence ID" value="NC_007643.1"/>
</dbReference>
<dbReference type="SMR" id="Q2RXY0"/>
<dbReference type="STRING" id="269796.Rru_A0210"/>
<dbReference type="EnsemblBacteria" id="ABC21015">
    <property type="protein sequence ID" value="ABC21015"/>
    <property type="gene ID" value="Rru_A0210"/>
</dbReference>
<dbReference type="KEGG" id="rru:Rru_A0210"/>
<dbReference type="PATRIC" id="fig|269796.9.peg.262"/>
<dbReference type="eggNOG" id="COG0227">
    <property type="taxonomic scope" value="Bacteria"/>
</dbReference>
<dbReference type="HOGENOM" id="CLU_064548_4_2_5"/>
<dbReference type="PhylomeDB" id="Q2RXY0"/>
<dbReference type="Proteomes" id="UP000001929">
    <property type="component" value="Chromosome"/>
</dbReference>
<dbReference type="GO" id="GO:1990904">
    <property type="term" value="C:ribonucleoprotein complex"/>
    <property type="evidence" value="ECO:0007669"/>
    <property type="project" value="UniProtKB-KW"/>
</dbReference>
<dbReference type="GO" id="GO:0005840">
    <property type="term" value="C:ribosome"/>
    <property type="evidence" value="ECO:0007669"/>
    <property type="project" value="UniProtKB-KW"/>
</dbReference>
<dbReference type="GO" id="GO:0003735">
    <property type="term" value="F:structural constituent of ribosome"/>
    <property type="evidence" value="ECO:0007669"/>
    <property type="project" value="InterPro"/>
</dbReference>
<dbReference type="GO" id="GO:0006412">
    <property type="term" value="P:translation"/>
    <property type="evidence" value="ECO:0007669"/>
    <property type="project" value="UniProtKB-UniRule"/>
</dbReference>
<dbReference type="Gene3D" id="2.30.170.40">
    <property type="entry name" value="Ribosomal protein L28/L24"/>
    <property type="match status" value="1"/>
</dbReference>
<dbReference type="HAMAP" id="MF_00373">
    <property type="entry name" value="Ribosomal_bL28"/>
    <property type="match status" value="1"/>
</dbReference>
<dbReference type="InterPro" id="IPR026569">
    <property type="entry name" value="Ribosomal_bL28"/>
</dbReference>
<dbReference type="InterPro" id="IPR034704">
    <property type="entry name" value="Ribosomal_bL28/bL31-like_sf"/>
</dbReference>
<dbReference type="InterPro" id="IPR001383">
    <property type="entry name" value="Ribosomal_bL28_bact-type"/>
</dbReference>
<dbReference type="InterPro" id="IPR037147">
    <property type="entry name" value="Ribosomal_bL28_sf"/>
</dbReference>
<dbReference type="NCBIfam" id="TIGR00009">
    <property type="entry name" value="L28"/>
    <property type="match status" value="1"/>
</dbReference>
<dbReference type="PANTHER" id="PTHR13528">
    <property type="entry name" value="39S RIBOSOMAL PROTEIN L28, MITOCHONDRIAL"/>
    <property type="match status" value="1"/>
</dbReference>
<dbReference type="PANTHER" id="PTHR13528:SF2">
    <property type="entry name" value="LARGE RIBOSOMAL SUBUNIT PROTEIN BL28M"/>
    <property type="match status" value="1"/>
</dbReference>
<dbReference type="Pfam" id="PF00830">
    <property type="entry name" value="Ribosomal_L28"/>
    <property type="match status" value="1"/>
</dbReference>
<dbReference type="SUPFAM" id="SSF143800">
    <property type="entry name" value="L28p-like"/>
    <property type="match status" value="1"/>
</dbReference>
<keyword id="KW-1185">Reference proteome</keyword>
<keyword id="KW-0687">Ribonucleoprotein</keyword>
<keyword id="KW-0689">Ribosomal protein</keyword>
<protein>
    <recommendedName>
        <fullName evidence="1">Large ribosomal subunit protein bL28</fullName>
    </recommendedName>
    <alternativeName>
        <fullName evidence="2">50S ribosomal protein L28</fullName>
    </alternativeName>
</protein>
<proteinExistence type="inferred from homology"/>
<name>RL28_RHORT</name>
<accession>Q2RXY0</accession>
<feature type="chain" id="PRO_1000007332" description="Large ribosomal subunit protein bL28">
    <location>
        <begin position="1"/>
        <end position="99"/>
    </location>
</feature>
<evidence type="ECO:0000255" key="1">
    <source>
        <dbReference type="HAMAP-Rule" id="MF_00373"/>
    </source>
</evidence>
<evidence type="ECO:0000305" key="2"/>
<organism>
    <name type="scientific">Rhodospirillum rubrum (strain ATCC 11170 / ATH 1.1.1 / DSM 467 / LMG 4362 / NCIMB 8255 / S1)</name>
    <dbReference type="NCBI Taxonomy" id="269796"/>
    <lineage>
        <taxon>Bacteria</taxon>
        <taxon>Pseudomonadati</taxon>
        <taxon>Pseudomonadota</taxon>
        <taxon>Alphaproteobacteria</taxon>
        <taxon>Rhodospirillales</taxon>
        <taxon>Rhodospirillaceae</taxon>
        <taxon>Rhodospirillum</taxon>
    </lineage>
</organism>
<gene>
    <name evidence="1" type="primary">rpmB</name>
    <name type="ordered locus">Rru_A0210</name>
</gene>
<comment type="similarity">
    <text evidence="1">Belongs to the bacterial ribosomal protein bL28 family.</text>
</comment>